<proteinExistence type="inferred from homology"/>
<evidence type="ECO:0000255" key="1">
    <source>
        <dbReference type="HAMAP-Rule" id="MF_01390"/>
    </source>
</evidence>
<organism>
    <name type="scientific">Calycanthus occidentalis</name>
    <name type="common">Spice bush</name>
    <dbReference type="NCBI Taxonomy" id="3430"/>
    <lineage>
        <taxon>Eukaryota</taxon>
        <taxon>Viridiplantae</taxon>
        <taxon>Streptophyta</taxon>
        <taxon>Embryophyta</taxon>
        <taxon>Tracheophyta</taxon>
        <taxon>Spermatophyta</taxon>
        <taxon>Magnoliopsida</taxon>
        <taxon>Magnoliidae</taxon>
        <taxon>Laurales</taxon>
        <taxon>Calycanthaceae</taxon>
        <taxon>Calycanthus</taxon>
    </lineage>
</organism>
<feature type="chain" id="PRO_0000143301" description="Maturase K">
    <location>
        <begin position="1"/>
        <end position="505"/>
    </location>
</feature>
<dbReference type="EMBL" id="AJ627917">
    <property type="protein sequence ID" value="CAF29537.1"/>
    <property type="molecule type" value="Genomic_DNA"/>
</dbReference>
<dbReference type="GO" id="GO:0009507">
    <property type="term" value="C:chloroplast"/>
    <property type="evidence" value="ECO:0007669"/>
    <property type="project" value="UniProtKB-SubCell"/>
</dbReference>
<dbReference type="GO" id="GO:0003723">
    <property type="term" value="F:RNA binding"/>
    <property type="evidence" value="ECO:0007669"/>
    <property type="project" value="UniProtKB-KW"/>
</dbReference>
<dbReference type="GO" id="GO:0006397">
    <property type="term" value="P:mRNA processing"/>
    <property type="evidence" value="ECO:0007669"/>
    <property type="project" value="UniProtKB-KW"/>
</dbReference>
<dbReference type="GO" id="GO:0008380">
    <property type="term" value="P:RNA splicing"/>
    <property type="evidence" value="ECO:0007669"/>
    <property type="project" value="UniProtKB-UniRule"/>
</dbReference>
<dbReference type="GO" id="GO:0008033">
    <property type="term" value="P:tRNA processing"/>
    <property type="evidence" value="ECO:0007669"/>
    <property type="project" value="UniProtKB-KW"/>
</dbReference>
<dbReference type="HAMAP" id="MF_01390">
    <property type="entry name" value="MatK"/>
    <property type="match status" value="1"/>
</dbReference>
<dbReference type="InterPro" id="IPR024937">
    <property type="entry name" value="Domain_X"/>
</dbReference>
<dbReference type="InterPro" id="IPR002866">
    <property type="entry name" value="Maturase_MatK"/>
</dbReference>
<dbReference type="InterPro" id="IPR024942">
    <property type="entry name" value="Maturase_MatK_N"/>
</dbReference>
<dbReference type="PANTHER" id="PTHR34811">
    <property type="entry name" value="MATURASE K"/>
    <property type="match status" value="1"/>
</dbReference>
<dbReference type="PANTHER" id="PTHR34811:SF1">
    <property type="entry name" value="MATURASE K"/>
    <property type="match status" value="1"/>
</dbReference>
<dbReference type="Pfam" id="PF01348">
    <property type="entry name" value="Intron_maturas2"/>
    <property type="match status" value="1"/>
</dbReference>
<dbReference type="Pfam" id="PF01824">
    <property type="entry name" value="MatK_N"/>
    <property type="match status" value="1"/>
</dbReference>
<reference key="1">
    <citation type="submission" date="2004-02" db="EMBL/GenBank/DDBJ databases">
        <title>Jumping genera: the phylogenetic positions of Cassytha, Hypodaphnis and Neocinnamomum (Lauraceae) based on different analyses of trnK intron sequences.</title>
        <authorList>
            <person name="Rohwer J.G."/>
            <person name="Rudolph B."/>
        </authorList>
    </citation>
    <scope>NUCLEOTIDE SEQUENCE [GENOMIC DNA]</scope>
    <source>
        <tissue>Leaf</tissue>
    </source>
</reference>
<geneLocation type="chloroplast"/>
<comment type="function">
    <text evidence="1">Usually encoded in the trnK tRNA gene intron. Probably assists in splicing its own and other chloroplast group II introns.</text>
</comment>
<comment type="subcellular location">
    <subcellularLocation>
        <location>Plastid</location>
        <location>Chloroplast</location>
    </subcellularLocation>
</comment>
<comment type="similarity">
    <text evidence="1">Belongs to the intron maturase 2 family. MatK subfamily.</text>
</comment>
<sequence length="505" mass="59312">MEELQGYLEIDGFRQHHFLYPLLLQEYIYALAHDHGLNGSILSEPMENLSHDNKSSSLIVKRLITRMHQQNHFIISVNDSNQKGFVGHNKNFHSQKISEGFAVIVEIPFSLQLVSSLEEKEIAKFHNSRSIHSIFPFFEDKLSHLNHVSDILIPYPIHLEILVQTLRCWIQDAPSLHLLRFFLHEYWNSNSLITPKKSISFFSKENQRLFLFLYNSHVYECESVFIFLRKQSSHLRSTSFGSFLERTHFYGKIEHLVVVLGNDFPKTLWLFKDPFVHYVRYQGKSILASRGTQFLIKKWKYHLVNFWQCHFYLWSQPDRIHLNQLCNHSFYFLGYLSSVQLNSSVVRSQMLENAFLMDTAIKKFETIVPIIPLIGSLAKAKFCNGSGHPISKPFRTDLSDSEILNRFGRICKNLSHYHSGSSKKQSLYRIKFILRLSCARTLSRKHKSTVRAFLKRLGSELLEEFLTEEEQVLSLIFPRTPSHRPHRERIWYLDIICINDLANHE</sequence>
<protein>
    <recommendedName>
        <fullName evidence="1">Maturase K</fullName>
    </recommendedName>
    <alternativeName>
        <fullName evidence="1">Intron maturase</fullName>
    </alternativeName>
</protein>
<name>MATK_CALOC</name>
<keyword id="KW-0150">Chloroplast</keyword>
<keyword id="KW-0507">mRNA processing</keyword>
<keyword id="KW-0934">Plastid</keyword>
<keyword id="KW-0694">RNA-binding</keyword>
<keyword id="KW-0819">tRNA processing</keyword>
<accession>Q5F4M7</accession>
<gene>
    <name evidence="1" type="primary">matK</name>
</gene>